<name>RL28_MYCLE</name>
<feature type="chain" id="PRO_0000178506" description="Large ribosomal subunit protein bL28">
    <location>
        <begin position="1"/>
        <end position="64"/>
    </location>
</feature>
<gene>
    <name type="primary">rpmB</name>
    <name type="ordered locus">ML1674</name>
</gene>
<proteinExistence type="inferred from homology"/>
<protein>
    <recommendedName>
        <fullName evidence="1">Large ribosomal subunit protein bL28</fullName>
    </recommendedName>
    <alternativeName>
        <fullName evidence="1">50S ribosomal protein L28</fullName>
    </alternativeName>
</protein>
<dbReference type="EMBL" id="AL583923">
    <property type="status" value="NOT_ANNOTATED_CDS"/>
    <property type="molecule type" value="Genomic_DNA"/>
</dbReference>
<dbReference type="SMR" id="P68998"/>
<dbReference type="Leproma" id="ML1674"/>
<dbReference type="Proteomes" id="UP000000806">
    <property type="component" value="Chromosome"/>
</dbReference>
<dbReference type="GO" id="GO:1990904">
    <property type="term" value="C:ribonucleoprotein complex"/>
    <property type="evidence" value="ECO:0007669"/>
    <property type="project" value="UniProtKB-KW"/>
</dbReference>
<dbReference type="GO" id="GO:0005840">
    <property type="term" value="C:ribosome"/>
    <property type="evidence" value="ECO:0007669"/>
    <property type="project" value="UniProtKB-KW"/>
</dbReference>
<dbReference type="GO" id="GO:0003735">
    <property type="term" value="F:structural constituent of ribosome"/>
    <property type="evidence" value="ECO:0007669"/>
    <property type="project" value="InterPro"/>
</dbReference>
<dbReference type="GO" id="GO:0006412">
    <property type="term" value="P:translation"/>
    <property type="evidence" value="ECO:0007669"/>
    <property type="project" value="UniProtKB-UniRule"/>
</dbReference>
<dbReference type="Gene3D" id="2.30.170.40">
    <property type="entry name" value="Ribosomal protein L28/L24"/>
    <property type="match status" value="1"/>
</dbReference>
<dbReference type="HAMAP" id="MF_00373">
    <property type="entry name" value="Ribosomal_bL28"/>
    <property type="match status" value="1"/>
</dbReference>
<dbReference type="InterPro" id="IPR050096">
    <property type="entry name" value="Bacterial_rp_bL28"/>
</dbReference>
<dbReference type="InterPro" id="IPR026569">
    <property type="entry name" value="Ribosomal_bL28"/>
</dbReference>
<dbReference type="InterPro" id="IPR034704">
    <property type="entry name" value="Ribosomal_bL28/bL31-like_sf"/>
</dbReference>
<dbReference type="InterPro" id="IPR001383">
    <property type="entry name" value="Ribosomal_bL28_bact-type"/>
</dbReference>
<dbReference type="InterPro" id="IPR037147">
    <property type="entry name" value="Ribosomal_bL28_sf"/>
</dbReference>
<dbReference type="NCBIfam" id="TIGR00009">
    <property type="entry name" value="L28"/>
    <property type="match status" value="1"/>
</dbReference>
<dbReference type="PANTHER" id="PTHR39080">
    <property type="entry name" value="50S RIBOSOMAL PROTEIN L28"/>
    <property type="match status" value="1"/>
</dbReference>
<dbReference type="PANTHER" id="PTHR39080:SF1">
    <property type="entry name" value="LARGE RIBOSOMAL SUBUNIT PROTEIN BL28A"/>
    <property type="match status" value="1"/>
</dbReference>
<dbReference type="Pfam" id="PF00830">
    <property type="entry name" value="Ribosomal_L28"/>
    <property type="match status" value="1"/>
</dbReference>
<dbReference type="SUPFAM" id="SSF143800">
    <property type="entry name" value="L28p-like"/>
    <property type="match status" value="1"/>
</dbReference>
<sequence length="64" mass="6922">MAAVCDICGKGPGFGKSVSHSHRRTSRRWDPNVQTVHMVTRPGGNKQQLKVCTSCIKAGKVTRG</sequence>
<reference key="1">
    <citation type="journal article" date="2001" name="Nature">
        <title>Massive gene decay in the leprosy bacillus.</title>
        <authorList>
            <person name="Cole S.T."/>
            <person name="Eiglmeier K."/>
            <person name="Parkhill J."/>
            <person name="James K.D."/>
            <person name="Thomson N.R."/>
            <person name="Wheeler P.R."/>
            <person name="Honore N."/>
            <person name="Garnier T."/>
            <person name="Churcher C.M."/>
            <person name="Harris D.E."/>
            <person name="Mungall K.L."/>
            <person name="Basham D."/>
            <person name="Brown D."/>
            <person name="Chillingworth T."/>
            <person name="Connor R."/>
            <person name="Davies R.M."/>
            <person name="Devlin K."/>
            <person name="Duthoy S."/>
            <person name="Feltwell T."/>
            <person name="Fraser A."/>
            <person name="Hamlin N."/>
            <person name="Holroyd S."/>
            <person name="Hornsby T."/>
            <person name="Jagels K."/>
            <person name="Lacroix C."/>
            <person name="Maclean J."/>
            <person name="Moule S."/>
            <person name="Murphy L.D."/>
            <person name="Oliver K."/>
            <person name="Quail M.A."/>
            <person name="Rajandream M.A."/>
            <person name="Rutherford K.M."/>
            <person name="Rutter S."/>
            <person name="Seeger K."/>
            <person name="Simon S."/>
            <person name="Simmonds M."/>
            <person name="Skelton J."/>
            <person name="Squares R."/>
            <person name="Squares S."/>
            <person name="Stevens K."/>
            <person name="Taylor K."/>
            <person name="Whitehead S."/>
            <person name="Woodward J.R."/>
            <person name="Barrell B.G."/>
        </authorList>
    </citation>
    <scope>NUCLEOTIDE SEQUENCE [LARGE SCALE GENOMIC DNA]</scope>
    <source>
        <strain>TN</strain>
    </source>
</reference>
<reference key="2">
    <citation type="journal article" date="2005" name="Bioinformatics">
        <title>Improving genome annotations using phylogenetic profile anomaly detection.</title>
        <authorList>
            <person name="Mikkelsen T.S."/>
            <person name="Galagan J.E."/>
            <person name="Mesirov J.P."/>
        </authorList>
    </citation>
    <scope>IDENTIFICATION</scope>
</reference>
<organism>
    <name type="scientific">Mycobacterium leprae (strain TN)</name>
    <dbReference type="NCBI Taxonomy" id="272631"/>
    <lineage>
        <taxon>Bacteria</taxon>
        <taxon>Bacillati</taxon>
        <taxon>Actinomycetota</taxon>
        <taxon>Actinomycetes</taxon>
        <taxon>Mycobacteriales</taxon>
        <taxon>Mycobacteriaceae</taxon>
        <taxon>Mycobacterium</taxon>
    </lineage>
</organism>
<accession>P68998</accession>
<evidence type="ECO:0000305" key="1"/>
<keyword id="KW-1185">Reference proteome</keyword>
<keyword id="KW-0687">Ribonucleoprotein</keyword>
<keyword id="KW-0689">Ribosomal protein</keyword>
<comment type="similarity">
    <text evidence="1">Belongs to the bacterial ribosomal protein bL28 family.</text>
</comment>